<name>COX1_CHOOC</name>
<sequence>MMRKWLYSTNHKDIGTLYFMFGIWAGMVGTSLSLLIRAELGNPGSLIGDDQIYNTIVTAHAFIMIFFMVMPIMIGGFGNWLVPLMLGAPDMAFPRMNNMSFWLLPPSIMLLISSSIVENGAGTGWTVYPPLSSNIAHSGSSVDLAIFSLHLAGISSILGAVNFITTIINMRPNNMSLDQMPLFVWSVGITALLLLLSLPVLAGAITMLLTDRNLNTSFFDPAGGGDPILYQHLFWFFGHPEVYILILPGFGMISHIISQESGKKETFGCLGMIYAMMAIGLLGFVVWAHHMFTVGMDIDTRAYFTSATMIIAVPTGIKIFSWLATLHGTQINYSPSMLWSLGFVFLFTVGGLTGVILANSSIDVTLHDTYYVVAHFHYVLSMGAVFAIMGGFVHWYPLFTGLALNPYLLKIQFFTMFIGVNLTFFPQHFLGLAGMPRRYSDYPDTYTSWNIISSLGSYISLVATMLMLMIIWESLINKRIILFPLNMNSSIEWYQNLPPAEHSYNELPILSNF</sequence>
<comment type="function">
    <text evidence="2">Component of the cytochrome c oxidase, the last enzyme in the mitochondrial electron transport chain which drives oxidative phosphorylation. The respiratory chain contains 3 multisubunit complexes succinate dehydrogenase (complex II, CII), ubiquinol-cytochrome c oxidoreductase (cytochrome b-c1 complex, complex III, CIII) and cytochrome c oxidase (complex IV, CIV), that cooperate to transfer electrons derived from NADH and succinate to molecular oxygen, creating an electrochemical gradient over the inner membrane that drives transmembrane transport and the ATP synthase. Cytochrome c oxidase is the component of the respiratory chain that catalyzes the reduction of oxygen to water. Electrons originating from reduced cytochrome c in the intermembrane space (IMS) are transferred via the dinuclear copper A center (CU(A)) of subunit 2 and heme A of subunit 1 to the active site in subunit 1, a binuclear center (BNC) formed by heme A3 and copper B (CU(B)). The BNC reduces molecular oxygen to 2 water molecules using 4 electrons from cytochrome c in the IMS and 4 protons from the mitochondrial matrix.</text>
</comment>
<comment type="catalytic activity">
    <reaction evidence="2">
        <text>4 Fe(II)-[cytochrome c] + O2 + 8 H(+)(in) = 4 Fe(III)-[cytochrome c] + 2 H2O + 4 H(+)(out)</text>
        <dbReference type="Rhea" id="RHEA:11436"/>
        <dbReference type="Rhea" id="RHEA-COMP:10350"/>
        <dbReference type="Rhea" id="RHEA-COMP:14399"/>
        <dbReference type="ChEBI" id="CHEBI:15377"/>
        <dbReference type="ChEBI" id="CHEBI:15378"/>
        <dbReference type="ChEBI" id="CHEBI:15379"/>
        <dbReference type="ChEBI" id="CHEBI:29033"/>
        <dbReference type="ChEBI" id="CHEBI:29034"/>
        <dbReference type="EC" id="7.1.1.9"/>
    </reaction>
    <physiologicalReaction direction="left-to-right" evidence="2">
        <dbReference type="Rhea" id="RHEA:11437"/>
    </physiologicalReaction>
</comment>
<comment type="cofactor">
    <cofactor evidence="2">
        <name>heme</name>
        <dbReference type="ChEBI" id="CHEBI:30413"/>
    </cofactor>
    <text evidence="2">Binds 2 heme A groups non-covalently per subunit.</text>
</comment>
<comment type="cofactor">
    <cofactor evidence="2">
        <name>Cu cation</name>
        <dbReference type="ChEBI" id="CHEBI:23378"/>
    </cofactor>
    <text evidence="2">Binds a copper B center.</text>
</comment>
<comment type="pathway">
    <text evidence="2">Energy metabolism; oxidative phosphorylation.</text>
</comment>
<comment type="subunit">
    <text evidence="2">Component of the cytochrome c oxidase (complex IV, CIV), a multisubunit enzyme composed of a catalytic core of 3 subunits and several supernumerary subunits. The complex exists as a monomer or a dimer and forms supercomplexes (SCs) in the inner mitochondrial membrane with ubiquinol-cytochrome c oxidoreductase (cytochrome b-c1 complex, complex III, CIII).</text>
</comment>
<comment type="subcellular location">
    <subcellularLocation>
        <location evidence="2">Mitochondrion inner membrane</location>
        <topology evidence="2">Multi-pass membrane protein</topology>
    </subcellularLocation>
</comment>
<comment type="similarity">
    <text evidence="4">Belongs to the heme-copper respiratory oxidase family.</text>
</comment>
<feature type="chain" id="PRO_0000183310" description="Cytochrome c oxidase subunit 1">
    <location>
        <begin position="1"/>
        <end position="513"/>
    </location>
</feature>
<feature type="transmembrane region" description="Helical" evidence="3">
    <location>
        <begin position="16"/>
        <end position="36"/>
    </location>
</feature>
<feature type="transmembrane region" description="Helical" evidence="3">
    <location>
        <begin position="62"/>
        <end position="82"/>
    </location>
</feature>
<feature type="transmembrane region" description="Helical" evidence="3">
    <location>
        <begin position="101"/>
        <end position="121"/>
    </location>
</feature>
<feature type="transmembrane region" description="Helical" evidence="3">
    <location>
        <begin position="144"/>
        <end position="164"/>
    </location>
</feature>
<feature type="transmembrane region" description="Helical" evidence="3">
    <location>
        <begin position="182"/>
        <end position="202"/>
    </location>
</feature>
<feature type="transmembrane region" description="Helical" evidence="3">
    <location>
        <begin position="233"/>
        <end position="253"/>
    </location>
</feature>
<feature type="transmembrane region" description="Helical" evidence="3">
    <location>
        <begin position="267"/>
        <end position="287"/>
    </location>
</feature>
<feature type="transmembrane region" description="Helical" evidence="3">
    <location>
        <begin position="304"/>
        <end position="324"/>
    </location>
</feature>
<feature type="transmembrane region" description="Helical" evidence="3">
    <location>
        <begin position="337"/>
        <end position="357"/>
    </location>
</feature>
<feature type="transmembrane region" description="Helical" evidence="3">
    <location>
        <begin position="384"/>
        <end position="404"/>
    </location>
</feature>
<feature type="transmembrane region" description="Helical" evidence="3">
    <location>
        <begin position="413"/>
        <end position="433"/>
    </location>
</feature>
<feature type="transmembrane region" description="Helical" evidence="3">
    <location>
        <begin position="451"/>
        <end position="471"/>
    </location>
</feature>
<feature type="binding site" evidence="2">
    <location>
        <position position="39"/>
    </location>
    <ligand>
        <name>Ca(2+)</name>
        <dbReference type="ChEBI" id="CHEBI:29108"/>
    </ligand>
</feature>
<feature type="binding site" evidence="2">
    <location>
        <position position="44"/>
    </location>
    <ligand>
        <name>Ca(2+)</name>
        <dbReference type="ChEBI" id="CHEBI:29108"/>
    </ligand>
</feature>
<feature type="binding site" description="axial binding residue" evidence="2">
    <location>
        <position position="60"/>
    </location>
    <ligand>
        <name>Fe(II)-heme a</name>
        <dbReference type="ChEBI" id="CHEBI:61715"/>
        <note>low-spin</note>
    </ligand>
    <ligandPart>
        <name>Fe</name>
        <dbReference type="ChEBI" id="CHEBI:18248"/>
    </ligandPart>
</feature>
<feature type="binding site" evidence="2">
    <location>
        <position position="239"/>
    </location>
    <ligand>
        <name>Cu cation</name>
        <dbReference type="ChEBI" id="CHEBI:23378"/>
        <label>B</label>
    </ligand>
</feature>
<feature type="binding site" evidence="1">
    <location>
        <position position="243"/>
    </location>
    <ligand>
        <name>O2</name>
        <dbReference type="ChEBI" id="CHEBI:15379"/>
    </ligand>
</feature>
<feature type="binding site" evidence="2">
    <location>
        <position position="289"/>
    </location>
    <ligand>
        <name>Cu cation</name>
        <dbReference type="ChEBI" id="CHEBI:23378"/>
        <label>B</label>
    </ligand>
</feature>
<feature type="binding site" evidence="2">
    <location>
        <position position="290"/>
    </location>
    <ligand>
        <name>Cu cation</name>
        <dbReference type="ChEBI" id="CHEBI:23378"/>
        <label>B</label>
    </ligand>
</feature>
<feature type="binding site" evidence="2">
    <location>
        <position position="367"/>
    </location>
    <ligand>
        <name>Mg(2+)</name>
        <dbReference type="ChEBI" id="CHEBI:18420"/>
        <note>ligand shared with subunit 2</note>
    </ligand>
</feature>
<feature type="binding site" evidence="2">
    <location>
        <position position="368"/>
    </location>
    <ligand>
        <name>Mg(2+)</name>
        <dbReference type="ChEBI" id="CHEBI:18420"/>
        <note>ligand shared with subunit 2</note>
    </ligand>
</feature>
<feature type="binding site" description="axial binding residue" evidence="2">
    <location>
        <position position="375"/>
    </location>
    <ligand>
        <name>heme a3</name>
        <dbReference type="ChEBI" id="CHEBI:83282"/>
        <note>high-spin</note>
    </ligand>
    <ligandPart>
        <name>Fe</name>
        <dbReference type="ChEBI" id="CHEBI:18248"/>
    </ligandPart>
</feature>
<feature type="binding site" description="axial binding residue" evidence="2">
    <location>
        <position position="377"/>
    </location>
    <ligand>
        <name>Fe(II)-heme a</name>
        <dbReference type="ChEBI" id="CHEBI:61715"/>
        <note>low-spin</note>
    </ligand>
    <ligandPart>
        <name>Fe</name>
        <dbReference type="ChEBI" id="CHEBI:18248"/>
    </ligandPart>
</feature>
<feature type="cross-link" description="1'-histidyl-3'-tyrosine (His-Tyr)" evidence="2">
    <location>
        <begin position="239"/>
        <end position="243"/>
    </location>
</feature>
<keyword id="KW-0106">Calcium</keyword>
<keyword id="KW-0186">Copper</keyword>
<keyword id="KW-0249">Electron transport</keyword>
<keyword id="KW-0349">Heme</keyword>
<keyword id="KW-0408">Iron</keyword>
<keyword id="KW-0460">Magnesium</keyword>
<keyword id="KW-0472">Membrane</keyword>
<keyword id="KW-0479">Metal-binding</keyword>
<keyword id="KW-0496">Mitochondrion</keyword>
<keyword id="KW-0999">Mitochondrion inner membrane</keyword>
<keyword id="KW-0679">Respiratory chain</keyword>
<keyword id="KW-1278">Translocase</keyword>
<keyword id="KW-0812">Transmembrane</keyword>
<keyword id="KW-1133">Transmembrane helix</keyword>
<keyword id="KW-0813">Transport</keyword>
<accession>P67793</accession>
<accession>P50670</accession>
<reference key="1">
    <citation type="submission" date="2012-05" db="EMBL/GenBank/DDBJ databases">
        <authorList>
            <person name="Roe A."/>
            <person name="Sperling F.A.H."/>
        </authorList>
    </citation>
    <scope>NUCLEOTIDE SEQUENCE [GENOMIC DNA]</scope>
    <scope>SEQUENCE REVISION TO 462</scope>
</reference>
<reference key="2">
    <citation type="journal article" date="1994" name="Mol. Biol. Evol.">
        <title>Mitochondrial DNA sequence variation in the spruce budworm species complex (Choristoneura: Lepidoptera).</title>
        <authorList>
            <person name="Sperling F.A.H."/>
            <person name="Hickey D.A."/>
        </authorList>
    </citation>
    <scope>NUCLEOTIDE SEQUENCE [GENOMIC DNA] OF 240-513</scope>
    <source>
        <strain>Isolate 16</strain>
    </source>
</reference>
<dbReference type="EC" id="7.1.1.9"/>
<dbReference type="EMBL" id="L19094">
    <property type="protein sequence ID" value="AAA53646.3"/>
    <property type="molecule type" value="Genomic_DNA"/>
</dbReference>
<dbReference type="EMBL" id="L19097">
    <property type="protein sequence ID" value="AAA53642.1"/>
    <property type="molecule type" value="Genomic_DNA"/>
</dbReference>
<dbReference type="SMR" id="P67793"/>
<dbReference type="UniPathway" id="UPA00705"/>
<dbReference type="GO" id="GO:0005743">
    <property type="term" value="C:mitochondrial inner membrane"/>
    <property type="evidence" value="ECO:0007669"/>
    <property type="project" value="UniProtKB-SubCell"/>
</dbReference>
<dbReference type="GO" id="GO:0045277">
    <property type="term" value="C:respiratory chain complex IV"/>
    <property type="evidence" value="ECO:0007669"/>
    <property type="project" value="InterPro"/>
</dbReference>
<dbReference type="GO" id="GO:0004129">
    <property type="term" value="F:cytochrome-c oxidase activity"/>
    <property type="evidence" value="ECO:0007669"/>
    <property type="project" value="UniProtKB-EC"/>
</dbReference>
<dbReference type="GO" id="GO:0020037">
    <property type="term" value="F:heme binding"/>
    <property type="evidence" value="ECO:0007669"/>
    <property type="project" value="InterPro"/>
</dbReference>
<dbReference type="GO" id="GO:0046872">
    <property type="term" value="F:metal ion binding"/>
    <property type="evidence" value="ECO:0007669"/>
    <property type="project" value="UniProtKB-KW"/>
</dbReference>
<dbReference type="GO" id="GO:0015990">
    <property type="term" value="P:electron transport coupled proton transport"/>
    <property type="evidence" value="ECO:0007669"/>
    <property type="project" value="TreeGrafter"/>
</dbReference>
<dbReference type="GO" id="GO:0006123">
    <property type="term" value="P:mitochondrial electron transport, cytochrome c to oxygen"/>
    <property type="evidence" value="ECO:0007669"/>
    <property type="project" value="TreeGrafter"/>
</dbReference>
<dbReference type="CDD" id="cd01663">
    <property type="entry name" value="Cyt_c_Oxidase_I"/>
    <property type="match status" value="1"/>
</dbReference>
<dbReference type="FunFam" id="1.20.210.10:FF:000001">
    <property type="entry name" value="Cytochrome c oxidase subunit 1"/>
    <property type="match status" value="1"/>
</dbReference>
<dbReference type="Gene3D" id="1.20.210.10">
    <property type="entry name" value="Cytochrome c oxidase-like, subunit I domain"/>
    <property type="match status" value="1"/>
</dbReference>
<dbReference type="InterPro" id="IPR023616">
    <property type="entry name" value="Cyt_c_oxase-like_su1_dom"/>
</dbReference>
<dbReference type="InterPro" id="IPR036927">
    <property type="entry name" value="Cyt_c_oxase-like_su1_sf"/>
</dbReference>
<dbReference type="InterPro" id="IPR000883">
    <property type="entry name" value="Cyt_C_Oxase_1"/>
</dbReference>
<dbReference type="InterPro" id="IPR023615">
    <property type="entry name" value="Cyt_c_Oxase_su1_BS"/>
</dbReference>
<dbReference type="InterPro" id="IPR033944">
    <property type="entry name" value="Cyt_c_oxase_su1_dom"/>
</dbReference>
<dbReference type="PANTHER" id="PTHR10422">
    <property type="entry name" value="CYTOCHROME C OXIDASE SUBUNIT 1"/>
    <property type="match status" value="1"/>
</dbReference>
<dbReference type="PANTHER" id="PTHR10422:SF18">
    <property type="entry name" value="CYTOCHROME C OXIDASE SUBUNIT 1"/>
    <property type="match status" value="1"/>
</dbReference>
<dbReference type="Pfam" id="PF00115">
    <property type="entry name" value="COX1"/>
    <property type="match status" value="1"/>
</dbReference>
<dbReference type="PRINTS" id="PR01165">
    <property type="entry name" value="CYCOXIDASEI"/>
</dbReference>
<dbReference type="SUPFAM" id="SSF81442">
    <property type="entry name" value="Cytochrome c oxidase subunit I-like"/>
    <property type="match status" value="1"/>
</dbReference>
<dbReference type="PROSITE" id="PS50855">
    <property type="entry name" value="COX1"/>
    <property type="match status" value="1"/>
</dbReference>
<dbReference type="PROSITE" id="PS00077">
    <property type="entry name" value="COX1_CUB"/>
    <property type="match status" value="1"/>
</dbReference>
<geneLocation type="mitochondrion"/>
<protein>
    <recommendedName>
        <fullName>Cytochrome c oxidase subunit 1</fullName>
        <ecNumber>7.1.1.9</ecNumber>
    </recommendedName>
    <alternativeName>
        <fullName>Cytochrome c oxidase polypeptide I</fullName>
    </alternativeName>
</protein>
<gene>
    <name type="primary">COI</name>
</gene>
<organism>
    <name type="scientific">Choristoneura occidentalis</name>
    <name type="common">Western spruce budworm</name>
    <dbReference type="NCBI Taxonomy" id="27541"/>
    <lineage>
        <taxon>Eukaryota</taxon>
        <taxon>Metazoa</taxon>
        <taxon>Ecdysozoa</taxon>
        <taxon>Arthropoda</taxon>
        <taxon>Hexapoda</taxon>
        <taxon>Insecta</taxon>
        <taxon>Pterygota</taxon>
        <taxon>Neoptera</taxon>
        <taxon>Endopterygota</taxon>
        <taxon>Lepidoptera</taxon>
        <taxon>Glossata</taxon>
        <taxon>Ditrysia</taxon>
        <taxon>Tortricoidea</taxon>
        <taxon>Tortricidae</taxon>
        <taxon>Tortricinae</taxon>
        <taxon>Choristoneura</taxon>
    </lineage>
</organism>
<evidence type="ECO:0000250" key="1">
    <source>
        <dbReference type="UniProtKB" id="P00396"/>
    </source>
</evidence>
<evidence type="ECO:0000250" key="2">
    <source>
        <dbReference type="UniProtKB" id="P00401"/>
    </source>
</evidence>
<evidence type="ECO:0000255" key="3"/>
<evidence type="ECO:0000305" key="4"/>
<proteinExistence type="inferred from homology"/>